<accession>C8V8H5</accession>
<accession>P0C2M6</accession>
<accession>Q5B4R4</accession>
<evidence type="ECO:0000250" key="1"/>
<evidence type="ECO:0000256" key="2">
    <source>
        <dbReference type="SAM" id="MobiDB-lite"/>
    </source>
</evidence>
<evidence type="ECO:0000305" key="3"/>
<comment type="function">
    <text evidence="1">Probably involved in transcription regulation via its interaction with the INO80 complex, a chromatin-remodeling complex.</text>
</comment>
<comment type="subunit">
    <text evidence="1">Component of the chromatin-remodeling INO80 complex.</text>
</comment>
<comment type="subcellular location">
    <subcellularLocation>
        <location evidence="1">Nucleus</location>
    </subcellularLocation>
</comment>
<comment type="sequence caution" evidence="3">
    <conflict type="erroneous gene model prediction">
        <sequence resource="EMBL-CDS" id="EAA60231"/>
    </conflict>
    <text>The predicted gene AN4466 has been split into 2 genes: AN10557 and AN10560.</text>
</comment>
<feature type="chain" id="PRO_0000413171" description="Ino eighty subunit 1">
    <location>
        <begin position="1"/>
        <end position="780"/>
    </location>
</feature>
<feature type="region of interest" description="Disordered" evidence="2">
    <location>
        <begin position="1"/>
        <end position="25"/>
    </location>
</feature>
<feature type="region of interest" description="Disordered" evidence="2">
    <location>
        <begin position="563"/>
        <end position="780"/>
    </location>
</feature>
<feature type="compositionally biased region" description="Basic and acidic residues" evidence="2">
    <location>
        <begin position="563"/>
        <end position="584"/>
    </location>
</feature>
<feature type="compositionally biased region" description="Basic residues" evidence="2">
    <location>
        <begin position="600"/>
        <end position="613"/>
    </location>
</feature>
<feature type="compositionally biased region" description="Low complexity" evidence="2">
    <location>
        <begin position="614"/>
        <end position="635"/>
    </location>
</feature>
<feature type="compositionally biased region" description="Acidic residues" evidence="2">
    <location>
        <begin position="676"/>
        <end position="686"/>
    </location>
</feature>
<feature type="compositionally biased region" description="Acidic residues" evidence="2">
    <location>
        <begin position="723"/>
        <end position="751"/>
    </location>
</feature>
<protein>
    <recommendedName>
        <fullName>Ino eighty subunit 1</fullName>
    </recommendedName>
</protein>
<gene>
    <name type="ORF">AN10560</name>
</gene>
<sequence>MADVESAGVDDSFAQSEPHDEQQIHNMTVGTRRQPNGTIGSVYSGNKIRHLKKEDGIPLWRKDIQYQFLKLVFEDKTPVFTRWPDGQKNMDFADIYIDAMARSSKTSKILKDKLQSDKQAAINMAMVCLLVNFGRMNTTLNFFPEMRAQLRTYHSIPSLQAHQDPNAYKQLQDAPRLKSILKGASEDVDQPNTLDKIKRENVPRTNPVNLIFVLAQYAPKVSEMHFFPPRDFFDLVMRSTLSSKSRAKAFLWLMWWYLESDFSREAALNNPFGPGLEGEGTGGLPIKVPSFEILTEEQANEENVDTQSEIEYGEEKRLERKRILEEEEPTPRAPKRPKKMPYWEFQYLKQMEPGTKIPSRQFSNKGDAYRAAADSDDLIEFRNPDGSIRSTLKMPRDEDYAYQSGSLDGPSPRIVLRTKAENTPDAASPAPPGSGYPILNRFVTEASPHHQGSSRRPRPLTQHQLAVERNRRQRIEYILAKRKGEAYRLLRAKRLTEIPFARYGRLLQNLPDGYDTDDDKSWGKGGLLPNPEEEEDFGECANYFLSVIRKASRRLDRWDYEHANGPRRDRKKEREERQKAREEAMDFDGDVDGKVSSRSSRARAQRNAKRKLARAAAAASSTPSASTPKTAAARSKGNRSRNPRDEKVAAATSLGANTGLETPSRDDALSPVQGDLEGEESLDDIDRELLGEGSGDEDDIPPRGLEPSRPAELGYDDSFLGGDADDALSSDEEEEEAEDEELDEMDVEGDDNLSAPGGEGRYAASDVSGPEMANGKPGWN</sequence>
<keyword id="KW-0539">Nucleus</keyword>
<keyword id="KW-1185">Reference proteome</keyword>
<keyword id="KW-0804">Transcription</keyword>
<keyword id="KW-0805">Transcription regulation</keyword>
<organism>
    <name type="scientific">Emericella nidulans (strain FGSC A4 / ATCC 38163 / CBS 112.46 / NRRL 194 / M139)</name>
    <name type="common">Aspergillus nidulans</name>
    <dbReference type="NCBI Taxonomy" id="227321"/>
    <lineage>
        <taxon>Eukaryota</taxon>
        <taxon>Fungi</taxon>
        <taxon>Dikarya</taxon>
        <taxon>Ascomycota</taxon>
        <taxon>Pezizomycotina</taxon>
        <taxon>Eurotiomycetes</taxon>
        <taxon>Eurotiomycetidae</taxon>
        <taxon>Eurotiales</taxon>
        <taxon>Aspergillaceae</taxon>
        <taxon>Aspergillus</taxon>
        <taxon>Aspergillus subgen. Nidulantes</taxon>
    </lineage>
</organism>
<dbReference type="EMBL" id="AACD01000077">
    <property type="protein sequence ID" value="EAA60231.1"/>
    <property type="status" value="ALT_SEQ"/>
    <property type="molecule type" value="Genomic_DNA"/>
</dbReference>
<dbReference type="EMBL" id="BN001303">
    <property type="protein sequence ID" value="CBF77463.1"/>
    <property type="molecule type" value="Genomic_DNA"/>
</dbReference>
<dbReference type="RefSeq" id="XP_662070.1">
    <property type="nucleotide sequence ID" value="XM_656978.1"/>
</dbReference>
<dbReference type="STRING" id="227321.C8V8H5"/>
<dbReference type="EnsemblFungi" id="CBF77463">
    <property type="protein sequence ID" value="CBF77463"/>
    <property type="gene ID" value="ANIA_10560"/>
</dbReference>
<dbReference type="KEGG" id="ani:ANIA_10560"/>
<dbReference type="eggNOG" id="ENOG502QVDM">
    <property type="taxonomic scope" value="Eukaryota"/>
</dbReference>
<dbReference type="HOGENOM" id="CLU_003735_0_0_1"/>
<dbReference type="InParanoid" id="C8V8H5"/>
<dbReference type="OMA" id="DAHAYKQ"/>
<dbReference type="OrthoDB" id="5413003at2759"/>
<dbReference type="Proteomes" id="UP000000560">
    <property type="component" value="Chromosome III"/>
</dbReference>
<dbReference type="GO" id="GO:0031011">
    <property type="term" value="C:Ino80 complex"/>
    <property type="evidence" value="ECO:0000318"/>
    <property type="project" value="GO_Central"/>
</dbReference>
<dbReference type="InterPro" id="IPR038014">
    <property type="entry name" value="Ies1"/>
</dbReference>
<dbReference type="PANTHER" id="PTHR37287">
    <property type="entry name" value="INO EIGHTY SUBUNIT 1"/>
    <property type="match status" value="1"/>
</dbReference>
<dbReference type="PANTHER" id="PTHR37287:SF1">
    <property type="entry name" value="INO EIGHTY SUBUNIT 1"/>
    <property type="match status" value="1"/>
</dbReference>
<proteinExistence type="inferred from homology"/>
<name>IES1_EMENI</name>
<reference key="1">
    <citation type="journal article" date="2005" name="Nature">
        <title>Sequencing of Aspergillus nidulans and comparative analysis with A. fumigatus and A. oryzae.</title>
        <authorList>
            <person name="Galagan J.E."/>
            <person name="Calvo S.E."/>
            <person name="Cuomo C."/>
            <person name="Ma L.-J."/>
            <person name="Wortman J.R."/>
            <person name="Batzoglou S."/>
            <person name="Lee S.-I."/>
            <person name="Bastuerkmen M."/>
            <person name="Spevak C.C."/>
            <person name="Clutterbuck J."/>
            <person name="Kapitonov V."/>
            <person name="Jurka J."/>
            <person name="Scazzocchio C."/>
            <person name="Farman M.L."/>
            <person name="Butler J."/>
            <person name="Purcell S."/>
            <person name="Harris S."/>
            <person name="Braus G.H."/>
            <person name="Draht O."/>
            <person name="Busch S."/>
            <person name="D'Enfert C."/>
            <person name="Bouchier C."/>
            <person name="Goldman G.H."/>
            <person name="Bell-Pedersen D."/>
            <person name="Griffiths-Jones S."/>
            <person name="Doonan J.H."/>
            <person name="Yu J."/>
            <person name="Vienken K."/>
            <person name="Pain A."/>
            <person name="Freitag M."/>
            <person name="Selker E.U."/>
            <person name="Archer D.B."/>
            <person name="Penalva M.A."/>
            <person name="Oakley B.R."/>
            <person name="Momany M."/>
            <person name="Tanaka T."/>
            <person name="Kumagai T."/>
            <person name="Asai K."/>
            <person name="Machida M."/>
            <person name="Nierman W.C."/>
            <person name="Denning D.W."/>
            <person name="Caddick M.X."/>
            <person name="Hynes M."/>
            <person name="Paoletti M."/>
            <person name="Fischer R."/>
            <person name="Miller B.L."/>
            <person name="Dyer P.S."/>
            <person name="Sachs M.S."/>
            <person name="Osmani S.A."/>
            <person name="Birren B.W."/>
        </authorList>
    </citation>
    <scope>NUCLEOTIDE SEQUENCE [LARGE SCALE GENOMIC DNA]</scope>
    <source>
        <strain>FGSC A4 / ATCC 38163 / CBS 112.46 / NRRL 194 / M139</strain>
    </source>
</reference>
<reference key="2">
    <citation type="journal article" date="2009" name="Fungal Genet. Biol.">
        <title>The 2008 update of the Aspergillus nidulans genome annotation: a community effort.</title>
        <authorList>
            <person name="Wortman J.R."/>
            <person name="Gilsenan J.M."/>
            <person name="Joardar V."/>
            <person name="Deegan J."/>
            <person name="Clutterbuck J."/>
            <person name="Andersen M.R."/>
            <person name="Archer D."/>
            <person name="Bencina M."/>
            <person name="Braus G."/>
            <person name="Coutinho P."/>
            <person name="von Dohren H."/>
            <person name="Doonan J."/>
            <person name="Driessen A.J."/>
            <person name="Durek P."/>
            <person name="Espeso E."/>
            <person name="Fekete E."/>
            <person name="Flipphi M."/>
            <person name="Estrada C.G."/>
            <person name="Geysens S."/>
            <person name="Goldman G."/>
            <person name="de Groot P.W."/>
            <person name="Hansen K."/>
            <person name="Harris S.D."/>
            <person name="Heinekamp T."/>
            <person name="Helmstaedt K."/>
            <person name="Henrissat B."/>
            <person name="Hofmann G."/>
            <person name="Homan T."/>
            <person name="Horio T."/>
            <person name="Horiuchi H."/>
            <person name="James S."/>
            <person name="Jones M."/>
            <person name="Karaffa L."/>
            <person name="Karanyi Z."/>
            <person name="Kato M."/>
            <person name="Keller N."/>
            <person name="Kelly D.E."/>
            <person name="Kiel J.A."/>
            <person name="Kim J.M."/>
            <person name="van der Klei I.J."/>
            <person name="Klis F.M."/>
            <person name="Kovalchuk A."/>
            <person name="Krasevec N."/>
            <person name="Kubicek C.P."/>
            <person name="Liu B."/>
            <person name="Maccabe A."/>
            <person name="Meyer V."/>
            <person name="Mirabito P."/>
            <person name="Miskei M."/>
            <person name="Mos M."/>
            <person name="Mullins J."/>
            <person name="Nelson D.R."/>
            <person name="Nielsen J."/>
            <person name="Oakley B.R."/>
            <person name="Osmani S.A."/>
            <person name="Pakula T."/>
            <person name="Paszewski A."/>
            <person name="Paulsen I."/>
            <person name="Pilsyk S."/>
            <person name="Pocsi I."/>
            <person name="Punt P.J."/>
            <person name="Ram A.F."/>
            <person name="Ren Q."/>
            <person name="Robellet X."/>
            <person name="Robson G."/>
            <person name="Seiboth B."/>
            <person name="van Solingen P."/>
            <person name="Specht T."/>
            <person name="Sun J."/>
            <person name="Taheri-Talesh N."/>
            <person name="Takeshita N."/>
            <person name="Ussery D."/>
            <person name="vanKuyk P.A."/>
            <person name="Visser H."/>
            <person name="van de Vondervoort P.J."/>
            <person name="de Vries R.P."/>
            <person name="Walton J."/>
            <person name="Xiang X."/>
            <person name="Xiong Y."/>
            <person name="Zeng A.P."/>
            <person name="Brandt B.W."/>
            <person name="Cornell M.J."/>
            <person name="van den Hondel C.A."/>
            <person name="Visser J."/>
            <person name="Oliver S.G."/>
            <person name="Turner G."/>
        </authorList>
    </citation>
    <scope>GENOME REANNOTATION</scope>
    <source>
        <strain>FGSC A4 / ATCC 38163 / CBS 112.46 / NRRL 194 / M139</strain>
    </source>
</reference>